<comment type="function">
    <text evidence="1">PPIases accelerate the folding of proteins. It catalyzes the cis-trans isomerization of proline imidic peptide bonds in oligopeptides. Acts as a regulatory subunit for PP2A-like phosphatases modulating their activity or substrate specificity, probably by inducing a conformational change in the catalytic subunit, a direct target of the PPIase (By similarity).</text>
</comment>
<comment type="catalytic activity">
    <reaction>
        <text>[protein]-peptidylproline (omega=180) = [protein]-peptidylproline (omega=0)</text>
        <dbReference type="Rhea" id="RHEA:16237"/>
        <dbReference type="Rhea" id="RHEA-COMP:10747"/>
        <dbReference type="Rhea" id="RHEA-COMP:10748"/>
        <dbReference type="ChEBI" id="CHEBI:83833"/>
        <dbReference type="ChEBI" id="CHEBI:83834"/>
        <dbReference type="EC" id="5.2.1.8"/>
    </reaction>
</comment>
<comment type="subcellular location">
    <subcellularLocation>
        <location evidence="1">Cytoplasm</location>
    </subcellularLocation>
</comment>
<comment type="similarity">
    <text evidence="3">Belongs to the PTPA-type PPIase family.</text>
</comment>
<sequence length="468" mass="53913">MSENNNKIPSFGLKSNVNSTYNHLETVAKLSIDEKLVNEPPKFVDIKTITPLNVENNGIAQKRIISKRDLRSFHTSSTYSELLNFIIQLSLDIQGKSLKSNFTITKNINSIIVLLNQLDQYITDIPPKQIRTRFGNESFVEWFNKVEKETPKLLFNLINDNPLNTPITNEVPIIYNEISTYLQNSWGDKQRIDYGSGHELNFICFLLCLVKIKFIKREEYELLVLIIFNKYLNMMRRLQESYWLEPAGSHGVWGLDDYHFLPFLFGSSQLIEHKYIRPKSIRNDEIVNSSFSDEYMYLGCIRFIGKVKSGGSLLEHSPMLVDISGVKNWSKVNEGMIKMFKSEVLGKLPIMQHMFFASIIQYIDNPDIIETDEEINQRKPIVTHSFSSCGCINRVPSMFAVANTDKILASTSTTTNNNNNNITSGDHCNDNEQQCSETHNHDHNHNHNHNHNHPPPPPQQQRSYFPLD</sequence>
<feature type="chain" id="PRO_0000328404" description="Probable serine/threonine-protein phosphatase 2A activator 2">
    <location>
        <begin position="1"/>
        <end position="468"/>
    </location>
</feature>
<feature type="region of interest" description="Disordered" evidence="2">
    <location>
        <begin position="412"/>
        <end position="468"/>
    </location>
</feature>
<feature type="compositionally biased region" description="Low complexity" evidence="2">
    <location>
        <begin position="412"/>
        <end position="424"/>
    </location>
</feature>
<organism>
    <name type="scientific">Dictyostelium discoideum</name>
    <name type="common">Social amoeba</name>
    <dbReference type="NCBI Taxonomy" id="44689"/>
    <lineage>
        <taxon>Eukaryota</taxon>
        <taxon>Amoebozoa</taxon>
        <taxon>Evosea</taxon>
        <taxon>Eumycetozoa</taxon>
        <taxon>Dictyostelia</taxon>
        <taxon>Dictyosteliales</taxon>
        <taxon>Dictyosteliaceae</taxon>
        <taxon>Dictyostelium</taxon>
    </lineage>
</organism>
<evidence type="ECO:0000250" key="1"/>
<evidence type="ECO:0000256" key="2">
    <source>
        <dbReference type="SAM" id="MobiDB-lite"/>
    </source>
</evidence>
<evidence type="ECO:0000305" key="3"/>
<accession>Q54WH6</accession>
<keyword id="KW-0963">Cytoplasm</keyword>
<keyword id="KW-0413">Isomerase</keyword>
<keyword id="KW-1185">Reference proteome</keyword>
<keyword id="KW-0697">Rotamase</keyword>
<protein>
    <recommendedName>
        <fullName>Probable serine/threonine-protein phosphatase 2A activator 2</fullName>
        <ecNumber>5.2.1.8</ecNumber>
    </recommendedName>
    <alternativeName>
        <fullName>Peptidyl-prolyl cis-trans isomerase PTPA-2</fullName>
        <shortName>PPIase PTPA-2</shortName>
        <shortName>Rotamase PTPA-2</shortName>
    </alternativeName>
    <alternativeName>
        <fullName>Phosphotyrosyl phosphatase activator 2</fullName>
    </alternativeName>
</protein>
<reference key="1">
    <citation type="journal article" date="2005" name="Nature">
        <title>The genome of the social amoeba Dictyostelium discoideum.</title>
        <authorList>
            <person name="Eichinger L."/>
            <person name="Pachebat J.A."/>
            <person name="Gloeckner G."/>
            <person name="Rajandream M.A."/>
            <person name="Sucgang R."/>
            <person name="Berriman M."/>
            <person name="Song J."/>
            <person name="Olsen R."/>
            <person name="Szafranski K."/>
            <person name="Xu Q."/>
            <person name="Tunggal B."/>
            <person name="Kummerfeld S."/>
            <person name="Madera M."/>
            <person name="Konfortov B.A."/>
            <person name="Rivero F."/>
            <person name="Bankier A.T."/>
            <person name="Lehmann R."/>
            <person name="Hamlin N."/>
            <person name="Davies R."/>
            <person name="Gaudet P."/>
            <person name="Fey P."/>
            <person name="Pilcher K."/>
            <person name="Chen G."/>
            <person name="Saunders D."/>
            <person name="Sodergren E.J."/>
            <person name="Davis P."/>
            <person name="Kerhornou A."/>
            <person name="Nie X."/>
            <person name="Hall N."/>
            <person name="Anjard C."/>
            <person name="Hemphill L."/>
            <person name="Bason N."/>
            <person name="Farbrother P."/>
            <person name="Desany B."/>
            <person name="Just E."/>
            <person name="Morio T."/>
            <person name="Rost R."/>
            <person name="Churcher C.M."/>
            <person name="Cooper J."/>
            <person name="Haydock S."/>
            <person name="van Driessche N."/>
            <person name="Cronin A."/>
            <person name="Goodhead I."/>
            <person name="Muzny D.M."/>
            <person name="Mourier T."/>
            <person name="Pain A."/>
            <person name="Lu M."/>
            <person name="Harper D."/>
            <person name="Lindsay R."/>
            <person name="Hauser H."/>
            <person name="James K.D."/>
            <person name="Quiles M."/>
            <person name="Madan Babu M."/>
            <person name="Saito T."/>
            <person name="Buchrieser C."/>
            <person name="Wardroper A."/>
            <person name="Felder M."/>
            <person name="Thangavelu M."/>
            <person name="Johnson D."/>
            <person name="Knights A."/>
            <person name="Loulseged H."/>
            <person name="Mungall K.L."/>
            <person name="Oliver K."/>
            <person name="Price C."/>
            <person name="Quail M.A."/>
            <person name="Urushihara H."/>
            <person name="Hernandez J."/>
            <person name="Rabbinowitsch E."/>
            <person name="Steffen D."/>
            <person name="Sanders M."/>
            <person name="Ma J."/>
            <person name="Kohara Y."/>
            <person name="Sharp S."/>
            <person name="Simmonds M.N."/>
            <person name="Spiegler S."/>
            <person name="Tivey A."/>
            <person name="Sugano S."/>
            <person name="White B."/>
            <person name="Walker D."/>
            <person name="Woodward J.R."/>
            <person name="Winckler T."/>
            <person name="Tanaka Y."/>
            <person name="Shaulsky G."/>
            <person name="Schleicher M."/>
            <person name="Weinstock G.M."/>
            <person name="Rosenthal A."/>
            <person name="Cox E.C."/>
            <person name="Chisholm R.L."/>
            <person name="Gibbs R.A."/>
            <person name="Loomis W.F."/>
            <person name="Platzer M."/>
            <person name="Kay R.R."/>
            <person name="Williams J.G."/>
            <person name="Dear P.H."/>
            <person name="Noegel A.A."/>
            <person name="Barrell B.G."/>
            <person name="Kuspa A."/>
        </authorList>
    </citation>
    <scope>NUCLEOTIDE SEQUENCE [LARGE SCALE GENOMIC DNA]</scope>
    <source>
        <strain>AX4</strain>
    </source>
</reference>
<gene>
    <name type="primary">ppp2r4B</name>
    <name type="ORF">DDB_G0279655</name>
</gene>
<proteinExistence type="inferred from homology"/>
<dbReference type="EC" id="5.2.1.8"/>
<dbReference type="EMBL" id="AAFI02000032">
    <property type="protein sequence ID" value="EAL67602.1"/>
    <property type="molecule type" value="Genomic_DNA"/>
</dbReference>
<dbReference type="RefSeq" id="XP_641577.1">
    <property type="nucleotide sequence ID" value="XM_636485.1"/>
</dbReference>
<dbReference type="SMR" id="Q54WH6"/>
<dbReference type="FunCoup" id="Q54WH6">
    <property type="interactions" value="31"/>
</dbReference>
<dbReference type="STRING" id="44689.Q54WH6"/>
<dbReference type="PaxDb" id="44689-DDB0237533"/>
<dbReference type="EnsemblProtists" id="EAL67602">
    <property type="protein sequence ID" value="EAL67602"/>
    <property type="gene ID" value="DDB_G0279655"/>
</dbReference>
<dbReference type="GeneID" id="8622152"/>
<dbReference type="KEGG" id="ddi:DDB_G0279655"/>
<dbReference type="dictyBase" id="DDB_G0279655"/>
<dbReference type="VEuPathDB" id="AmoebaDB:DDB_G0279655"/>
<dbReference type="eggNOG" id="KOG2867">
    <property type="taxonomic scope" value="Eukaryota"/>
</dbReference>
<dbReference type="HOGENOM" id="CLU_030733_0_0_1"/>
<dbReference type="InParanoid" id="Q54WH6"/>
<dbReference type="OMA" id="KNWYKVE"/>
<dbReference type="PhylomeDB" id="Q54WH6"/>
<dbReference type="PRO" id="PR:Q54WH6"/>
<dbReference type="Proteomes" id="UP000002195">
    <property type="component" value="Chromosome 3"/>
</dbReference>
<dbReference type="GO" id="GO:0005737">
    <property type="term" value="C:cytoplasm"/>
    <property type="evidence" value="ECO:0000318"/>
    <property type="project" value="GO_Central"/>
</dbReference>
<dbReference type="GO" id="GO:0005634">
    <property type="term" value="C:nucleus"/>
    <property type="evidence" value="ECO:0000318"/>
    <property type="project" value="GO_Central"/>
</dbReference>
<dbReference type="GO" id="GO:0000159">
    <property type="term" value="C:protein phosphatase type 2A complex"/>
    <property type="evidence" value="ECO:0000318"/>
    <property type="project" value="GO_Central"/>
</dbReference>
<dbReference type="GO" id="GO:0003755">
    <property type="term" value="F:peptidyl-prolyl cis-trans isomerase activity"/>
    <property type="evidence" value="ECO:0000318"/>
    <property type="project" value="GO_Central"/>
</dbReference>
<dbReference type="GO" id="GO:0008160">
    <property type="term" value="F:protein tyrosine phosphatase activator activity"/>
    <property type="evidence" value="ECO:0000318"/>
    <property type="project" value="GO_Central"/>
</dbReference>
<dbReference type="GO" id="GO:0007052">
    <property type="term" value="P:mitotic spindle organization"/>
    <property type="evidence" value="ECO:0000318"/>
    <property type="project" value="GO_Central"/>
</dbReference>
<dbReference type="CDD" id="cd04087">
    <property type="entry name" value="PTPA"/>
    <property type="match status" value="1"/>
</dbReference>
<dbReference type="FunFam" id="1.20.120.1150:FF:000002">
    <property type="entry name" value="Serine/threonine-protein phosphatase 2A activator"/>
    <property type="match status" value="1"/>
</dbReference>
<dbReference type="Gene3D" id="1.20.120.1150">
    <property type="match status" value="1"/>
</dbReference>
<dbReference type="InterPro" id="IPR004327">
    <property type="entry name" value="Phstyr_phstse_ac"/>
</dbReference>
<dbReference type="InterPro" id="IPR043170">
    <property type="entry name" value="PTPA_C_lid"/>
</dbReference>
<dbReference type="InterPro" id="IPR037218">
    <property type="entry name" value="PTPA_sf"/>
</dbReference>
<dbReference type="PANTHER" id="PTHR10012">
    <property type="entry name" value="SERINE/THREONINE-PROTEIN PHOSPHATASE 2A REGULATORY SUBUNIT B"/>
    <property type="match status" value="1"/>
</dbReference>
<dbReference type="PANTHER" id="PTHR10012:SF1">
    <property type="entry name" value="SERINE_THREONINE-PROTEIN PHOSPHATASE 2A ACTIVATOR 2-RELATED"/>
    <property type="match status" value="1"/>
</dbReference>
<dbReference type="Pfam" id="PF03095">
    <property type="entry name" value="PTPA"/>
    <property type="match status" value="1"/>
</dbReference>
<dbReference type="SUPFAM" id="SSF140984">
    <property type="entry name" value="PTPA-like"/>
    <property type="match status" value="1"/>
</dbReference>
<name>PTPA2_DICDI</name>